<protein>
    <recommendedName>
        <fullName>UPF0146 protein AF_0739.1</fullName>
    </recommendedName>
</protein>
<name>Y73A_ARCFU</name>
<gene>
    <name type="ordered locus">AF_0739.1</name>
</gene>
<reference key="1">
    <citation type="journal article" date="1997" name="Nature">
        <title>The complete genome sequence of the hyperthermophilic, sulphate-reducing archaeon Archaeoglobus fulgidus.</title>
        <authorList>
            <person name="Klenk H.-P."/>
            <person name="Clayton R.A."/>
            <person name="Tomb J.-F."/>
            <person name="White O."/>
            <person name="Nelson K.E."/>
            <person name="Ketchum K.A."/>
            <person name="Dodson R.J."/>
            <person name="Gwinn M.L."/>
            <person name="Hickey E.K."/>
            <person name="Peterson J.D."/>
            <person name="Richardson D.L."/>
            <person name="Kerlavage A.R."/>
            <person name="Graham D.E."/>
            <person name="Kyrpides N.C."/>
            <person name="Fleischmann R.D."/>
            <person name="Quackenbush J."/>
            <person name="Lee N.H."/>
            <person name="Sutton G.G."/>
            <person name="Gill S.R."/>
            <person name="Kirkness E.F."/>
            <person name="Dougherty B.A."/>
            <person name="McKenney K."/>
            <person name="Adams M.D."/>
            <person name="Loftus B.J."/>
            <person name="Peterson S.N."/>
            <person name="Reich C.I."/>
            <person name="McNeil L.K."/>
            <person name="Badger J.H."/>
            <person name="Glodek A."/>
            <person name="Zhou L."/>
            <person name="Overbeek R."/>
            <person name="Gocayne J.D."/>
            <person name="Weidman J.F."/>
            <person name="McDonald L.A."/>
            <person name="Utterback T.R."/>
            <person name="Cotton M.D."/>
            <person name="Spriggs T."/>
            <person name="Artiach P."/>
            <person name="Kaine B.P."/>
            <person name="Sykes S.M."/>
            <person name="Sadow P.W."/>
            <person name="D'Andrea K.P."/>
            <person name="Bowman C."/>
            <person name="Fujii C."/>
            <person name="Garland S.A."/>
            <person name="Mason T.M."/>
            <person name="Olsen G.J."/>
            <person name="Fraser C.M."/>
            <person name="Smith H.O."/>
            <person name="Woese C.R."/>
            <person name="Venter J.C."/>
        </authorList>
    </citation>
    <scope>NUCLEOTIDE SEQUENCE [LARGE SCALE GENOMIC DNA]</scope>
    <source>
        <strain>ATCC 49558 / DSM 4304 / JCM 9628 / NBRC 100126 / VC-16</strain>
    </source>
</reference>
<reference key="2">
    <citation type="unpublished observations" date="2001-04">
        <authorList>
            <person name="Medigue C."/>
            <person name="Bocs S."/>
        </authorList>
    </citation>
    <scope>IDENTIFICATION</scope>
</reference>
<sequence length="130" mass="14901">MFMLQIADYIAENYRGKVVEVGIGRFTAVAELLARRGFEVFATDVVERRAPEGCRFYVDDVTKPNLKIYEGASLIYSLRPPPELFSAIVEVSRKVGADCLIKPLYGDYMEARIVNYKGAQFYLIRRENYD</sequence>
<organism>
    <name type="scientific">Archaeoglobus fulgidus (strain ATCC 49558 / DSM 4304 / JCM 9628 / NBRC 100126 / VC-16)</name>
    <dbReference type="NCBI Taxonomy" id="224325"/>
    <lineage>
        <taxon>Archaea</taxon>
        <taxon>Methanobacteriati</taxon>
        <taxon>Methanobacteriota</taxon>
        <taxon>Archaeoglobi</taxon>
        <taxon>Archaeoglobales</taxon>
        <taxon>Archaeoglobaceae</taxon>
        <taxon>Archaeoglobus</taxon>
    </lineage>
</organism>
<evidence type="ECO:0000305" key="1"/>
<dbReference type="EMBL" id="AE000782">
    <property type="status" value="NOT_ANNOTATED_CDS"/>
    <property type="molecule type" value="Genomic_DNA"/>
</dbReference>
<dbReference type="SMR" id="P58014"/>
<dbReference type="PhylomeDB" id="P58014"/>
<dbReference type="Proteomes" id="UP000002199">
    <property type="component" value="Chromosome"/>
</dbReference>
<dbReference type="Gene3D" id="3.40.50.150">
    <property type="entry name" value="Vaccinia Virus protein VP39"/>
    <property type="match status" value="1"/>
</dbReference>
<dbReference type="HAMAP" id="MF_00341">
    <property type="entry name" value="UPF0146"/>
    <property type="match status" value="1"/>
</dbReference>
<dbReference type="InterPro" id="IPR029063">
    <property type="entry name" value="SAM-dependent_MTases_sf"/>
</dbReference>
<dbReference type="InterPro" id="IPR005353">
    <property type="entry name" value="UPF0146"/>
</dbReference>
<dbReference type="Pfam" id="PF03686">
    <property type="entry name" value="UPF0146"/>
    <property type="match status" value="1"/>
</dbReference>
<dbReference type="PIRSF" id="PIRSF016725">
    <property type="entry name" value="UCP016725"/>
    <property type="match status" value="1"/>
</dbReference>
<dbReference type="SUPFAM" id="SSF53335">
    <property type="entry name" value="S-adenosyl-L-methionine-dependent methyltransferases"/>
    <property type="match status" value="1"/>
</dbReference>
<comment type="similarity">
    <text evidence="1">Belongs to the UPF0146 family.</text>
</comment>
<feature type="chain" id="PRO_0000145092" description="UPF0146 protein AF_0739.1">
    <location>
        <begin position="1"/>
        <end position="130"/>
    </location>
</feature>
<proteinExistence type="inferred from homology"/>
<accession>P58014</accession>
<keyword id="KW-1185">Reference proteome</keyword>